<sequence>MRFPTPLVPARLLRRYKRFLSDAVLEDGTEITAHCPNPGAMLGLKDDGARIWLLPNDDPKKKLKYGWRLVELPDGHFAGIDAGLPNALVKEALAEGQIEALRGYSSIRPEQKYGDENSRIDFLLSEPGRPDAFVEVKNCHLRRESDWAEFPDCVTDRGAKHLRELTKIARSGGRAVMLYVVQRTDCARFRLAPDLDPAYARAFDAARDAGVEVLCHGTDITPEGITLTGPLPVDPSPQARD</sequence>
<reference key="1">
    <citation type="submission" date="2006-02" db="EMBL/GenBank/DDBJ databases">
        <title>Complete sequence of chromosome of Jannaschia sp. CCS1.</title>
        <authorList>
            <consortium name="US DOE Joint Genome Institute"/>
            <person name="Copeland A."/>
            <person name="Lucas S."/>
            <person name="Lapidus A."/>
            <person name="Barry K."/>
            <person name="Detter J.C."/>
            <person name="Glavina del Rio T."/>
            <person name="Hammon N."/>
            <person name="Israni S."/>
            <person name="Pitluck S."/>
            <person name="Brettin T."/>
            <person name="Bruce D."/>
            <person name="Han C."/>
            <person name="Tapia R."/>
            <person name="Gilna P."/>
            <person name="Chertkov O."/>
            <person name="Saunders E."/>
            <person name="Schmutz J."/>
            <person name="Larimer F."/>
            <person name="Land M."/>
            <person name="Kyrpides N."/>
            <person name="Lykidis A."/>
            <person name="Moran M.A."/>
            <person name="Belas R."/>
            <person name="Ye W."/>
            <person name="Buchan A."/>
            <person name="Gonzalez J.M."/>
            <person name="Schell M.A."/>
            <person name="Richardson P."/>
        </authorList>
    </citation>
    <scope>NUCLEOTIDE SEQUENCE [LARGE SCALE GENOMIC DNA]</scope>
    <source>
        <strain>CCS1</strain>
    </source>
</reference>
<keyword id="KW-1185">Reference proteome</keyword>
<accession>Q28VR1</accession>
<organism>
    <name type="scientific">Jannaschia sp. (strain CCS1)</name>
    <dbReference type="NCBI Taxonomy" id="290400"/>
    <lineage>
        <taxon>Bacteria</taxon>
        <taxon>Pseudomonadati</taxon>
        <taxon>Pseudomonadota</taxon>
        <taxon>Alphaproteobacteria</taxon>
        <taxon>Rhodobacterales</taxon>
        <taxon>Roseobacteraceae</taxon>
        <taxon>Jannaschia</taxon>
    </lineage>
</organism>
<name>SFSA_JANSC</name>
<protein>
    <recommendedName>
        <fullName evidence="1">Sugar fermentation stimulation protein homolog</fullName>
    </recommendedName>
</protein>
<evidence type="ECO:0000255" key="1">
    <source>
        <dbReference type="HAMAP-Rule" id="MF_00095"/>
    </source>
</evidence>
<dbReference type="EMBL" id="CP000264">
    <property type="protein sequence ID" value="ABD53201.1"/>
    <property type="molecule type" value="Genomic_DNA"/>
</dbReference>
<dbReference type="RefSeq" id="WP_011453410.1">
    <property type="nucleotide sequence ID" value="NC_007802.1"/>
</dbReference>
<dbReference type="SMR" id="Q28VR1"/>
<dbReference type="STRING" id="290400.Jann_0284"/>
<dbReference type="DNASU" id="3932722"/>
<dbReference type="KEGG" id="jan:Jann_0284"/>
<dbReference type="eggNOG" id="COG1489">
    <property type="taxonomic scope" value="Bacteria"/>
</dbReference>
<dbReference type="HOGENOM" id="CLU_052299_2_0_5"/>
<dbReference type="OrthoDB" id="9802365at2"/>
<dbReference type="Proteomes" id="UP000008326">
    <property type="component" value="Chromosome"/>
</dbReference>
<dbReference type="GO" id="GO:0003677">
    <property type="term" value="F:DNA binding"/>
    <property type="evidence" value="ECO:0007669"/>
    <property type="project" value="InterPro"/>
</dbReference>
<dbReference type="CDD" id="cd22359">
    <property type="entry name" value="SfsA-like_bacterial"/>
    <property type="match status" value="1"/>
</dbReference>
<dbReference type="Gene3D" id="2.40.50.580">
    <property type="match status" value="1"/>
</dbReference>
<dbReference type="Gene3D" id="3.40.1350.60">
    <property type="match status" value="1"/>
</dbReference>
<dbReference type="HAMAP" id="MF_00095">
    <property type="entry name" value="SfsA"/>
    <property type="match status" value="1"/>
</dbReference>
<dbReference type="InterPro" id="IPR005224">
    <property type="entry name" value="SfsA"/>
</dbReference>
<dbReference type="InterPro" id="IPR040452">
    <property type="entry name" value="SfsA_C"/>
</dbReference>
<dbReference type="InterPro" id="IPR041465">
    <property type="entry name" value="SfsA_N"/>
</dbReference>
<dbReference type="NCBIfam" id="TIGR00230">
    <property type="entry name" value="sfsA"/>
    <property type="match status" value="1"/>
</dbReference>
<dbReference type="PANTHER" id="PTHR30545">
    <property type="entry name" value="SUGAR FERMENTATION STIMULATION PROTEIN A"/>
    <property type="match status" value="1"/>
</dbReference>
<dbReference type="PANTHER" id="PTHR30545:SF2">
    <property type="entry name" value="SUGAR FERMENTATION STIMULATION PROTEIN A"/>
    <property type="match status" value="1"/>
</dbReference>
<dbReference type="Pfam" id="PF03749">
    <property type="entry name" value="SfsA"/>
    <property type="match status" value="1"/>
</dbReference>
<dbReference type="Pfam" id="PF17746">
    <property type="entry name" value="SfsA_N"/>
    <property type="match status" value="1"/>
</dbReference>
<proteinExistence type="inferred from homology"/>
<comment type="similarity">
    <text evidence="1">Belongs to the SfsA family.</text>
</comment>
<feature type="chain" id="PRO_1000007990" description="Sugar fermentation stimulation protein homolog">
    <location>
        <begin position="1"/>
        <end position="241"/>
    </location>
</feature>
<gene>
    <name evidence="1" type="primary">sfsA</name>
    <name type="ordered locus">Jann_0284</name>
</gene>